<proteinExistence type="inferred from homology"/>
<comment type="function">
    <text evidence="1">Catalyzes the acyloin condensation reaction between C atoms 2 and 3 of pyruvate and glyceraldehyde 3-phosphate to yield 1-deoxy-D-xylulose-5-phosphate (DXP).</text>
</comment>
<comment type="catalytic activity">
    <reaction evidence="1">
        <text>D-glyceraldehyde 3-phosphate + pyruvate + H(+) = 1-deoxy-D-xylulose 5-phosphate + CO2</text>
        <dbReference type="Rhea" id="RHEA:12605"/>
        <dbReference type="ChEBI" id="CHEBI:15361"/>
        <dbReference type="ChEBI" id="CHEBI:15378"/>
        <dbReference type="ChEBI" id="CHEBI:16526"/>
        <dbReference type="ChEBI" id="CHEBI:57792"/>
        <dbReference type="ChEBI" id="CHEBI:59776"/>
        <dbReference type="EC" id="2.2.1.7"/>
    </reaction>
</comment>
<comment type="cofactor">
    <cofactor evidence="1">
        <name>Mg(2+)</name>
        <dbReference type="ChEBI" id="CHEBI:18420"/>
    </cofactor>
    <text evidence="1">Binds 1 Mg(2+) ion per subunit.</text>
</comment>
<comment type="cofactor">
    <cofactor evidence="1">
        <name>thiamine diphosphate</name>
        <dbReference type="ChEBI" id="CHEBI:58937"/>
    </cofactor>
    <text evidence="1">Binds 1 thiamine pyrophosphate per subunit.</text>
</comment>
<comment type="pathway">
    <text evidence="1">Metabolic intermediate biosynthesis; 1-deoxy-D-xylulose 5-phosphate biosynthesis; 1-deoxy-D-xylulose 5-phosphate from D-glyceraldehyde 3-phosphate and pyruvate: step 1/1.</text>
</comment>
<comment type="subunit">
    <text evidence="1">Homodimer.</text>
</comment>
<comment type="similarity">
    <text evidence="1">Belongs to the transketolase family. DXPS subfamily.</text>
</comment>
<gene>
    <name evidence="1" type="primary">dxs</name>
    <name type="ordered locus">NGO_0036</name>
</gene>
<accession>Q5FAI2</accession>
<protein>
    <recommendedName>
        <fullName evidence="1">1-deoxy-D-xylulose-5-phosphate synthase</fullName>
        <ecNumber evidence="1">2.2.1.7</ecNumber>
    </recommendedName>
    <alternativeName>
        <fullName evidence="1">1-deoxyxylulose-5-phosphate synthase</fullName>
        <shortName evidence="1">DXP synthase</shortName>
        <shortName evidence="1">DXPS</shortName>
    </alternativeName>
</protein>
<sequence length="637" mass="68812">MNPSPLLHLIDSPQDLRRLDKKQLPRLAGELRAFLLESVGQTGGHFASNLGAVELTIALHYVYDTPEDKLVWDVGHQSYPHKILTGRKNQMHTMRQYGGLAGFPKRCESEYDAFGVGHSSTSIGAALGMAAADKLLGGDRRSVAIIGDGAMTAGQAFEALNCAGDMDVDLLVVLNDNEMSISPNVGALPKYLASNVVRDMHGLLSTVKAQTGKVLDKIPGAMEFAQKVEHKIKTLAEEAEHAKQSLSLFENFGFRYTGPVDGHNVENLVDVLKDLRSRKGPQLLHVITKKGNGYKLAENDPVKYHAVANLPKEGGAQMPSEKEPKPAAKPTYTQVFGKWLCDRAAADSRLVAITPAMREGSGLVEFEQRFPDRYFDVGIAEQHAVTFAGGLACEGMKPVVAIYSTFLQRAYDQLVHDIALQNLPVLFAVDRAGIVGADGPTHAGLYDLSFLRCVPNMIVAAPSDENECRLLLSTCYQADAPAAVRYPRGTGTGAPVSDGMETVEIGKGIIRREGEKTAFIAFGSMVATALAVAEKLNATVADMRFVKPIDEELIVRLARSHDRIVTLEENAEQGGAGGAVLEVLAKHGICKPVLLLGVADTVTEHGDPKKLLDDLGLSAEAVERRVREWLPDRDAAN</sequence>
<organism>
    <name type="scientific">Neisseria gonorrhoeae (strain ATCC 700825 / FA 1090)</name>
    <dbReference type="NCBI Taxonomy" id="242231"/>
    <lineage>
        <taxon>Bacteria</taxon>
        <taxon>Pseudomonadati</taxon>
        <taxon>Pseudomonadota</taxon>
        <taxon>Betaproteobacteria</taxon>
        <taxon>Neisseriales</taxon>
        <taxon>Neisseriaceae</taxon>
        <taxon>Neisseria</taxon>
    </lineage>
</organism>
<dbReference type="EC" id="2.2.1.7" evidence="1"/>
<dbReference type="EMBL" id="AE004969">
    <property type="protein sequence ID" value="AAW88805.1"/>
    <property type="molecule type" value="Genomic_DNA"/>
</dbReference>
<dbReference type="RefSeq" id="WP_003696634.1">
    <property type="nucleotide sequence ID" value="NC_002946.2"/>
</dbReference>
<dbReference type="RefSeq" id="YP_207217.1">
    <property type="nucleotide sequence ID" value="NC_002946.2"/>
</dbReference>
<dbReference type="SMR" id="Q5FAI2"/>
<dbReference type="STRING" id="242231.NGO_0036"/>
<dbReference type="KEGG" id="ngo:NGO_0036"/>
<dbReference type="PATRIC" id="fig|242231.10.peg.36"/>
<dbReference type="HOGENOM" id="CLU_009227_1_4_4"/>
<dbReference type="UniPathway" id="UPA00064">
    <property type="reaction ID" value="UER00091"/>
</dbReference>
<dbReference type="Proteomes" id="UP000000535">
    <property type="component" value="Chromosome"/>
</dbReference>
<dbReference type="GO" id="GO:0005829">
    <property type="term" value="C:cytosol"/>
    <property type="evidence" value="ECO:0007669"/>
    <property type="project" value="TreeGrafter"/>
</dbReference>
<dbReference type="GO" id="GO:0008661">
    <property type="term" value="F:1-deoxy-D-xylulose-5-phosphate synthase activity"/>
    <property type="evidence" value="ECO:0007669"/>
    <property type="project" value="UniProtKB-UniRule"/>
</dbReference>
<dbReference type="GO" id="GO:0000287">
    <property type="term" value="F:magnesium ion binding"/>
    <property type="evidence" value="ECO:0007669"/>
    <property type="project" value="UniProtKB-UniRule"/>
</dbReference>
<dbReference type="GO" id="GO:0030976">
    <property type="term" value="F:thiamine pyrophosphate binding"/>
    <property type="evidence" value="ECO:0007669"/>
    <property type="project" value="UniProtKB-UniRule"/>
</dbReference>
<dbReference type="GO" id="GO:0052865">
    <property type="term" value="P:1-deoxy-D-xylulose 5-phosphate biosynthetic process"/>
    <property type="evidence" value="ECO:0007669"/>
    <property type="project" value="UniProtKB-UniPathway"/>
</dbReference>
<dbReference type="GO" id="GO:0019288">
    <property type="term" value="P:isopentenyl diphosphate biosynthetic process, methylerythritol 4-phosphate pathway"/>
    <property type="evidence" value="ECO:0007669"/>
    <property type="project" value="TreeGrafter"/>
</dbReference>
<dbReference type="GO" id="GO:0016114">
    <property type="term" value="P:terpenoid biosynthetic process"/>
    <property type="evidence" value="ECO:0007669"/>
    <property type="project" value="UniProtKB-UniRule"/>
</dbReference>
<dbReference type="GO" id="GO:0009228">
    <property type="term" value="P:thiamine biosynthetic process"/>
    <property type="evidence" value="ECO:0007669"/>
    <property type="project" value="UniProtKB-UniRule"/>
</dbReference>
<dbReference type="CDD" id="cd02007">
    <property type="entry name" value="TPP_DXS"/>
    <property type="match status" value="1"/>
</dbReference>
<dbReference type="CDD" id="cd07033">
    <property type="entry name" value="TPP_PYR_DXS_TK_like"/>
    <property type="match status" value="1"/>
</dbReference>
<dbReference type="FunFam" id="3.40.50.920:FF:000002">
    <property type="entry name" value="1-deoxy-D-xylulose-5-phosphate synthase"/>
    <property type="match status" value="1"/>
</dbReference>
<dbReference type="FunFam" id="3.40.50.970:FF:000005">
    <property type="entry name" value="1-deoxy-D-xylulose-5-phosphate synthase"/>
    <property type="match status" value="1"/>
</dbReference>
<dbReference type="Gene3D" id="3.40.50.920">
    <property type="match status" value="1"/>
</dbReference>
<dbReference type="Gene3D" id="3.40.50.970">
    <property type="match status" value="2"/>
</dbReference>
<dbReference type="HAMAP" id="MF_00315">
    <property type="entry name" value="DXP_synth"/>
    <property type="match status" value="1"/>
</dbReference>
<dbReference type="InterPro" id="IPR005477">
    <property type="entry name" value="Dxylulose-5-P_synthase"/>
</dbReference>
<dbReference type="InterPro" id="IPR029061">
    <property type="entry name" value="THDP-binding"/>
</dbReference>
<dbReference type="InterPro" id="IPR009014">
    <property type="entry name" value="Transketo_C/PFOR_II"/>
</dbReference>
<dbReference type="InterPro" id="IPR005475">
    <property type="entry name" value="Transketolase-like_Pyr-bd"/>
</dbReference>
<dbReference type="InterPro" id="IPR020826">
    <property type="entry name" value="Transketolase_BS"/>
</dbReference>
<dbReference type="InterPro" id="IPR033248">
    <property type="entry name" value="Transketolase_C"/>
</dbReference>
<dbReference type="InterPro" id="IPR049557">
    <property type="entry name" value="Transketolase_CS"/>
</dbReference>
<dbReference type="NCBIfam" id="TIGR00204">
    <property type="entry name" value="dxs"/>
    <property type="match status" value="1"/>
</dbReference>
<dbReference type="NCBIfam" id="NF003933">
    <property type="entry name" value="PRK05444.2-2"/>
    <property type="match status" value="1"/>
</dbReference>
<dbReference type="PANTHER" id="PTHR43322">
    <property type="entry name" value="1-D-DEOXYXYLULOSE 5-PHOSPHATE SYNTHASE-RELATED"/>
    <property type="match status" value="1"/>
</dbReference>
<dbReference type="PANTHER" id="PTHR43322:SF5">
    <property type="entry name" value="1-DEOXY-D-XYLULOSE-5-PHOSPHATE SYNTHASE, CHLOROPLASTIC"/>
    <property type="match status" value="1"/>
</dbReference>
<dbReference type="Pfam" id="PF13292">
    <property type="entry name" value="DXP_synthase_N"/>
    <property type="match status" value="1"/>
</dbReference>
<dbReference type="Pfam" id="PF02779">
    <property type="entry name" value="Transket_pyr"/>
    <property type="match status" value="1"/>
</dbReference>
<dbReference type="Pfam" id="PF02780">
    <property type="entry name" value="Transketolase_C"/>
    <property type="match status" value="1"/>
</dbReference>
<dbReference type="SMART" id="SM00861">
    <property type="entry name" value="Transket_pyr"/>
    <property type="match status" value="1"/>
</dbReference>
<dbReference type="SUPFAM" id="SSF52518">
    <property type="entry name" value="Thiamin diphosphate-binding fold (THDP-binding)"/>
    <property type="match status" value="2"/>
</dbReference>
<dbReference type="SUPFAM" id="SSF52922">
    <property type="entry name" value="TK C-terminal domain-like"/>
    <property type="match status" value="1"/>
</dbReference>
<dbReference type="PROSITE" id="PS00801">
    <property type="entry name" value="TRANSKETOLASE_1"/>
    <property type="match status" value="1"/>
</dbReference>
<dbReference type="PROSITE" id="PS00802">
    <property type="entry name" value="TRANSKETOLASE_2"/>
    <property type="match status" value="1"/>
</dbReference>
<evidence type="ECO:0000255" key="1">
    <source>
        <dbReference type="HAMAP-Rule" id="MF_00315"/>
    </source>
</evidence>
<feature type="chain" id="PRO_0000256442" description="1-deoxy-D-xylulose-5-phosphate synthase">
    <location>
        <begin position="1"/>
        <end position="637"/>
    </location>
</feature>
<feature type="binding site" evidence="1">
    <location>
        <position position="76"/>
    </location>
    <ligand>
        <name>thiamine diphosphate</name>
        <dbReference type="ChEBI" id="CHEBI:58937"/>
    </ligand>
</feature>
<feature type="binding site" evidence="1">
    <location>
        <begin position="117"/>
        <end position="119"/>
    </location>
    <ligand>
        <name>thiamine diphosphate</name>
        <dbReference type="ChEBI" id="CHEBI:58937"/>
    </ligand>
</feature>
<feature type="binding site" evidence="1">
    <location>
        <position position="148"/>
    </location>
    <ligand>
        <name>Mg(2+)</name>
        <dbReference type="ChEBI" id="CHEBI:18420"/>
    </ligand>
</feature>
<feature type="binding site" evidence="1">
    <location>
        <begin position="149"/>
        <end position="150"/>
    </location>
    <ligand>
        <name>thiamine diphosphate</name>
        <dbReference type="ChEBI" id="CHEBI:58937"/>
    </ligand>
</feature>
<feature type="binding site" evidence="1">
    <location>
        <position position="177"/>
    </location>
    <ligand>
        <name>Mg(2+)</name>
        <dbReference type="ChEBI" id="CHEBI:18420"/>
    </ligand>
</feature>
<feature type="binding site" evidence="1">
    <location>
        <position position="177"/>
    </location>
    <ligand>
        <name>thiamine diphosphate</name>
        <dbReference type="ChEBI" id="CHEBI:58937"/>
    </ligand>
</feature>
<feature type="binding site" evidence="1">
    <location>
        <position position="294"/>
    </location>
    <ligand>
        <name>thiamine diphosphate</name>
        <dbReference type="ChEBI" id="CHEBI:58937"/>
    </ligand>
</feature>
<feature type="binding site" evidence="1">
    <location>
        <position position="381"/>
    </location>
    <ligand>
        <name>thiamine diphosphate</name>
        <dbReference type="ChEBI" id="CHEBI:58937"/>
    </ligand>
</feature>
<keyword id="KW-0414">Isoprene biosynthesis</keyword>
<keyword id="KW-0460">Magnesium</keyword>
<keyword id="KW-0479">Metal-binding</keyword>
<keyword id="KW-1185">Reference proteome</keyword>
<keyword id="KW-0784">Thiamine biosynthesis</keyword>
<keyword id="KW-0786">Thiamine pyrophosphate</keyword>
<keyword id="KW-0808">Transferase</keyword>
<name>DXS_NEIG1</name>
<reference key="1">
    <citation type="submission" date="2003-03" db="EMBL/GenBank/DDBJ databases">
        <title>The complete genome sequence of Neisseria gonorrhoeae.</title>
        <authorList>
            <person name="Lewis L.A."/>
            <person name="Gillaspy A.F."/>
            <person name="McLaughlin R.E."/>
            <person name="Gipson M."/>
            <person name="Ducey T.F."/>
            <person name="Ownbey T."/>
            <person name="Hartman K."/>
            <person name="Nydick C."/>
            <person name="Carson M.B."/>
            <person name="Vaughn J."/>
            <person name="Thomson C."/>
            <person name="Song L."/>
            <person name="Lin S."/>
            <person name="Yuan X."/>
            <person name="Najar F."/>
            <person name="Zhan M."/>
            <person name="Ren Q."/>
            <person name="Zhu H."/>
            <person name="Qi S."/>
            <person name="Kenton S.M."/>
            <person name="Lai H."/>
            <person name="White J.D."/>
            <person name="Clifton S."/>
            <person name="Roe B.A."/>
            <person name="Dyer D.W."/>
        </authorList>
    </citation>
    <scope>NUCLEOTIDE SEQUENCE [LARGE SCALE GENOMIC DNA]</scope>
    <source>
        <strain>ATCC 700825 / FA 1090</strain>
    </source>
</reference>